<dbReference type="EC" id="3.1.3.1" evidence="6"/>
<dbReference type="EMBL" id="M61704">
    <property type="protein sequence ID" value="AAA37531.1"/>
    <property type="molecule type" value="Genomic_DNA"/>
</dbReference>
<dbReference type="EMBL" id="AK145571">
    <property type="protein sequence ID" value="BAE26520.1"/>
    <property type="molecule type" value="mRNA"/>
</dbReference>
<dbReference type="EMBL" id="CH466520">
    <property type="protein sequence ID" value="EDL40194.1"/>
    <property type="molecule type" value="Genomic_DNA"/>
</dbReference>
<dbReference type="CCDS" id="CCDS15126.1"/>
<dbReference type="RefSeq" id="NP_031459.3">
    <property type="nucleotide sequence ID" value="NM_007433.3"/>
</dbReference>
<dbReference type="RefSeq" id="XP_006529145.1">
    <property type="nucleotide sequence ID" value="XM_006529082.3"/>
</dbReference>
<dbReference type="RefSeq" id="XP_011246206.1">
    <property type="nucleotide sequence ID" value="XM_011247904.2"/>
</dbReference>
<dbReference type="SMR" id="P24823"/>
<dbReference type="FunCoup" id="P24823">
    <property type="interactions" value="161"/>
</dbReference>
<dbReference type="STRING" id="10090.ENSMUSP00000027455"/>
<dbReference type="BindingDB" id="P24823"/>
<dbReference type="ChEMBL" id="CHEMBL3112374"/>
<dbReference type="GlyCosmos" id="P24823">
    <property type="glycosylation" value="3 sites, No reported glycans"/>
</dbReference>
<dbReference type="GlyGen" id="P24823">
    <property type="glycosylation" value="3 sites"/>
</dbReference>
<dbReference type="iPTMnet" id="P24823"/>
<dbReference type="PhosphoSitePlus" id="P24823"/>
<dbReference type="jPOST" id="P24823"/>
<dbReference type="PaxDb" id="10090-ENSMUSP00000027455"/>
<dbReference type="PeptideAtlas" id="P24823"/>
<dbReference type="ProteomicsDB" id="289734"/>
<dbReference type="DNASU" id="11650"/>
<dbReference type="Ensembl" id="ENSMUST00000027455.13">
    <property type="protein sequence ID" value="ENSMUSP00000027455.7"/>
    <property type="gene ID" value="ENSMUSG00000026246.13"/>
</dbReference>
<dbReference type="Ensembl" id="ENSMUST00000188310.2">
    <property type="protein sequence ID" value="ENSMUSP00000139887.2"/>
    <property type="gene ID" value="ENSMUSG00000026246.13"/>
</dbReference>
<dbReference type="GeneID" id="11650"/>
<dbReference type="KEGG" id="mmu:11650"/>
<dbReference type="UCSC" id="uc007bvy.1">
    <property type="organism name" value="mouse"/>
</dbReference>
<dbReference type="AGR" id="MGI:108009"/>
<dbReference type="CTD" id="11650"/>
<dbReference type="MGI" id="MGI:108009">
    <property type="gene designation" value="Alppl2"/>
</dbReference>
<dbReference type="VEuPathDB" id="HostDB:ENSMUSG00000026246"/>
<dbReference type="eggNOG" id="KOG4126">
    <property type="taxonomic scope" value="Eukaryota"/>
</dbReference>
<dbReference type="GeneTree" id="ENSGT00950000183063"/>
<dbReference type="HOGENOM" id="CLU_008539_4_0_1"/>
<dbReference type="InParanoid" id="P24823"/>
<dbReference type="OMA" id="MAEHINQ"/>
<dbReference type="OrthoDB" id="5818554at2759"/>
<dbReference type="PhylomeDB" id="P24823"/>
<dbReference type="TreeFam" id="TF323513"/>
<dbReference type="Reactome" id="R-MMU-163125">
    <property type="pathway name" value="Post-translational modification: synthesis of GPI-anchored proteins"/>
</dbReference>
<dbReference type="Reactome" id="R-MMU-6811438">
    <property type="pathway name" value="Intra-Golgi traffic"/>
</dbReference>
<dbReference type="BioGRID-ORCS" id="11650">
    <property type="hits" value="2 hits in 79 CRISPR screens"/>
</dbReference>
<dbReference type="PRO" id="PR:P24823"/>
<dbReference type="Proteomes" id="UP000000589">
    <property type="component" value="Chromosome 1"/>
</dbReference>
<dbReference type="RNAct" id="P24823">
    <property type="molecule type" value="protein"/>
</dbReference>
<dbReference type="Bgee" id="ENSMUSG00000026246">
    <property type="expression patterns" value="Expressed in morula and 26 other cell types or tissues"/>
</dbReference>
<dbReference type="GO" id="GO:0030016">
    <property type="term" value="C:myofibril"/>
    <property type="evidence" value="ECO:0000314"/>
    <property type="project" value="MGI"/>
</dbReference>
<dbReference type="GO" id="GO:0005886">
    <property type="term" value="C:plasma membrane"/>
    <property type="evidence" value="ECO:0007669"/>
    <property type="project" value="UniProtKB-SubCell"/>
</dbReference>
<dbReference type="GO" id="GO:0098552">
    <property type="term" value="C:side of membrane"/>
    <property type="evidence" value="ECO:0007669"/>
    <property type="project" value="UniProtKB-KW"/>
</dbReference>
<dbReference type="GO" id="GO:0004035">
    <property type="term" value="F:alkaline phosphatase activity"/>
    <property type="evidence" value="ECO:0000314"/>
    <property type="project" value="MGI"/>
</dbReference>
<dbReference type="GO" id="GO:0046872">
    <property type="term" value="F:metal ion binding"/>
    <property type="evidence" value="ECO:0007669"/>
    <property type="project" value="UniProtKB-KW"/>
</dbReference>
<dbReference type="CDD" id="cd16012">
    <property type="entry name" value="ALP"/>
    <property type="match status" value="1"/>
</dbReference>
<dbReference type="FunFam" id="3.40.720.10:FF:000008">
    <property type="entry name" value="Alkaline phosphatase"/>
    <property type="match status" value="1"/>
</dbReference>
<dbReference type="Gene3D" id="3.40.720.10">
    <property type="entry name" value="Alkaline Phosphatase, subunit A"/>
    <property type="match status" value="1"/>
</dbReference>
<dbReference type="InterPro" id="IPR001952">
    <property type="entry name" value="Alkaline_phosphatase"/>
</dbReference>
<dbReference type="InterPro" id="IPR018299">
    <property type="entry name" value="Alkaline_phosphatase_AS"/>
</dbReference>
<dbReference type="InterPro" id="IPR017850">
    <property type="entry name" value="Alkaline_phosphatase_core_sf"/>
</dbReference>
<dbReference type="PANTHER" id="PTHR11596">
    <property type="entry name" value="ALKALINE PHOSPHATASE"/>
    <property type="match status" value="1"/>
</dbReference>
<dbReference type="PANTHER" id="PTHR11596:SF42">
    <property type="entry name" value="ALKALINE PHOSPHATASE, GERM CELL TYPE"/>
    <property type="match status" value="1"/>
</dbReference>
<dbReference type="Pfam" id="PF00245">
    <property type="entry name" value="Alk_phosphatase"/>
    <property type="match status" value="1"/>
</dbReference>
<dbReference type="PRINTS" id="PR00113">
    <property type="entry name" value="ALKPHPHTASE"/>
</dbReference>
<dbReference type="SMART" id="SM00098">
    <property type="entry name" value="alkPPc"/>
    <property type="match status" value="1"/>
</dbReference>
<dbReference type="SUPFAM" id="SSF53649">
    <property type="entry name" value="Alkaline phosphatase-like"/>
    <property type="match status" value="1"/>
</dbReference>
<dbReference type="PROSITE" id="PS00123">
    <property type="entry name" value="ALKALINE_PHOSPHATASE"/>
    <property type="match status" value="1"/>
</dbReference>
<evidence type="ECO:0000250" key="1"/>
<evidence type="ECO:0000250" key="2">
    <source>
        <dbReference type="UniProtKB" id="P05186"/>
    </source>
</evidence>
<evidence type="ECO:0000250" key="3">
    <source>
        <dbReference type="UniProtKB" id="P05187"/>
    </source>
</evidence>
<evidence type="ECO:0000250" key="4">
    <source>
        <dbReference type="UniProtKB" id="P10696"/>
    </source>
</evidence>
<evidence type="ECO:0000255" key="5"/>
<evidence type="ECO:0000255" key="6">
    <source>
        <dbReference type="PROSITE-ProRule" id="PRU10042"/>
    </source>
</evidence>
<evidence type="ECO:0000269" key="7">
    <source>
    </source>
</evidence>
<evidence type="ECO:0000269" key="8">
    <source>
    </source>
</evidence>
<evidence type="ECO:0000303" key="9">
    <source>
    </source>
</evidence>
<evidence type="ECO:0000305" key="10"/>
<evidence type="ECO:0000312" key="11">
    <source>
        <dbReference type="MGI" id="MGI:108009"/>
    </source>
</evidence>
<name>PPBN_MOUSE</name>
<keyword id="KW-0106">Calcium</keyword>
<keyword id="KW-1003">Cell membrane</keyword>
<keyword id="KW-1015">Disulfide bond</keyword>
<keyword id="KW-0325">Glycoprotein</keyword>
<keyword id="KW-0336">GPI-anchor</keyword>
<keyword id="KW-0378">Hydrolase</keyword>
<keyword id="KW-0449">Lipoprotein</keyword>
<keyword id="KW-0460">Magnesium</keyword>
<keyword id="KW-0472">Membrane</keyword>
<keyword id="KW-0479">Metal-binding</keyword>
<keyword id="KW-1185">Reference proteome</keyword>
<keyword id="KW-0732">Signal</keyword>
<keyword id="KW-0862">Zinc</keyword>
<reference key="1">
    <citation type="journal article" date="1990" name="Genomics">
        <title>Genomic structure and comparison of mouse tissue-specific alkaline phosphatase genes.</title>
        <authorList>
            <person name="Manes T."/>
            <person name="Glade K."/>
            <person name="Ziomek C.A."/>
            <person name="Millan J.L."/>
        </authorList>
    </citation>
    <scope>NUCLEOTIDE SEQUENCE [GENOMIC DNA]</scope>
    <scope>TISSUE SPECIFICITY</scope>
</reference>
<reference key="2">
    <citation type="journal article" date="2005" name="Science">
        <title>The transcriptional landscape of the mammalian genome.</title>
        <authorList>
            <person name="Carninci P."/>
            <person name="Kasukawa T."/>
            <person name="Katayama S."/>
            <person name="Gough J."/>
            <person name="Frith M.C."/>
            <person name="Maeda N."/>
            <person name="Oyama R."/>
            <person name="Ravasi T."/>
            <person name="Lenhard B."/>
            <person name="Wells C."/>
            <person name="Kodzius R."/>
            <person name="Shimokawa K."/>
            <person name="Bajic V.B."/>
            <person name="Brenner S.E."/>
            <person name="Batalov S."/>
            <person name="Forrest A.R."/>
            <person name="Zavolan M."/>
            <person name="Davis M.J."/>
            <person name="Wilming L.G."/>
            <person name="Aidinis V."/>
            <person name="Allen J.E."/>
            <person name="Ambesi-Impiombato A."/>
            <person name="Apweiler R."/>
            <person name="Aturaliya R.N."/>
            <person name="Bailey T.L."/>
            <person name="Bansal M."/>
            <person name="Baxter L."/>
            <person name="Beisel K.W."/>
            <person name="Bersano T."/>
            <person name="Bono H."/>
            <person name="Chalk A.M."/>
            <person name="Chiu K.P."/>
            <person name="Choudhary V."/>
            <person name="Christoffels A."/>
            <person name="Clutterbuck D.R."/>
            <person name="Crowe M.L."/>
            <person name="Dalla E."/>
            <person name="Dalrymple B.P."/>
            <person name="de Bono B."/>
            <person name="Della Gatta G."/>
            <person name="di Bernardo D."/>
            <person name="Down T."/>
            <person name="Engstrom P."/>
            <person name="Fagiolini M."/>
            <person name="Faulkner G."/>
            <person name="Fletcher C.F."/>
            <person name="Fukushima T."/>
            <person name="Furuno M."/>
            <person name="Futaki S."/>
            <person name="Gariboldi M."/>
            <person name="Georgii-Hemming P."/>
            <person name="Gingeras T.R."/>
            <person name="Gojobori T."/>
            <person name="Green R.E."/>
            <person name="Gustincich S."/>
            <person name="Harbers M."/>
            <person name="Hayashi Y."/>
            <person name="Hensch T.K."/>
            <person name="Hirokawa N."/>
            <person name="Hill D."/>
            <person name="Huminiecki L."/>
            <person name="Iacono M."/>
            <person name="Ikeo K."/>
            <person name="Iwama A."/>
            <person name="Ishikawa T."/>
            <person name="Jakt M."/>
            <person name="Kanapin A."/>
            <person name="Katoh M."/>
            <person name="Kawasawa Y."/>
            <person name="Kelso J."/>
            <person name="Kitamura H."/>
            <person name="Kitano H."/>
            <person name="Kollias G."/>
            <person name="Krishnan S.P."/>
            <person name="Kruger A."/>
            <person name="Kummerfeld S.K."/>
            <person name="Kurochkin I.V."/>
            <person name="Lareau L.F."/>
            <person name="Lazarevic D."/>
            <person name="Lipovich L."/>
            <person name="Liu J."/>
            <person name="Liuni S."/>
            <person name="McWilliam S."/>
            <person name="Madan Babu M."/>
            <person name="Madera M."/>
            <person name="Marchionni L."/>
            <person name="Matsuda H."/>
            <person name="Matsuzawa S."/>
            <person name="Miki H."/>
            <person name="Mignone F."/>
            <person name="Miyake S."/>
            <person name="Morris K."/>
            <person name="Mottagui-Tabar S."/>
            <person name="Mulder N."/>
            <person name="Nakano N."/>
            <person name="Nakauchi H."/>
            <person name="Ng P."/>
            <person name="Nilsson R."/>
            <person name="Nishiguchi S."/>
            <person name="Nishikawa S."/>
            <person name="Nori F."/>
            <person name="Ohara O."/>
            <person name="Okazaki Y."/>
            <person name="Orlando V."/>
            <person name="Pang K.C."/>
            <person name="Pavan W.J."/>
            <person name="Pavesi G."/>
            <person name="Pesole G."/>
            <person name="Petrovsky N."/>
            <person name="Piazza S."/>
            <person name="Reed J."/>
            <person name="Reid J.F."/>
            <person name="Ring B.Z."/>
            <person name="Ringwald M."/>
            <person name="Rost B."/>
            <person name="Ruan Y."/>
            <person name="Salzberg S.L."/>
            <person name="Sandelin A."/>
            <person name="Schneider C."/>
            <person name="Schoenbach C."/>
            <person name="Sekiguchi K."/>
            <person name="Semple C.A."/>
            <person name="Seno S."/>
            <person name="Sessa L."/>
            <person name="Sheng Y."/>
            <person name="Shibata Y."/>
            <person name="Shimada H."/>
            <person name="Shimada K."/>
            <person name="Silva D."/>
            <person name="Sinclair B."/>
            <person name="Sperling S."/>
            <person name="Stupka E."/>
            <person name="Sugiura K."/>
            <person name="Sultana R."/>
            <person name="Takenaka Y."/>
            <person name="Taki K."/>
            <person name="Tammoja K."/>
            <person name="Tan S.L."/>
            <person name="Tang S."/>
            <person name="Taylor M.S."/>
            <person name="Tegner J."/>
            <person name="Teichmann S.A."/>
            <person name="Ueda H.R."/>
            <person name="van Nimwegen E."/>
            <person name="Verardo R."/>
            <person name="Wei C.L."/>
            <person name="Yagi K."/>
            <person name="Yamanishi H."/>
            <person name="Zabarovsky E."/>
            <person name="Zhu S."/>
            <person name="Zimmer A."/>
            <person name="Hide W."/>
            <person name="Bult C."/>
            <person name="Grimmond S.M."/>
            <person name="Teasdale R.D."/>
            <person name="Liu E.T."/>
            <person name="Brusic V."/>
            <person name="Quackenbush J."/>
            <person name="Wahlestedt C."/>
            <person name="Mattick J.S."/>
            <person name="Hume D.A."/>
            <person name="Kai C."/>
            <person name="Sasaki D."/>
            <person name="Tomaru Y."/>
            <person name="Fukuda S."/>
            <person name="Kanamori-Katayama M."/>
            <person name="Suzuki M."/>
            <person name="Aoki J."/>
            <person name="Arakawa T."/>
            <person name="Iida J."/>
            <person name="Imamura K."/>
            <person name="Itoh M."/>
            <person name="Kato T."/>
            <person name="Kawaji H."/>
            <person name="Kawagashira N."/>
            <person name="Kawashima T."/>
            <person name="Kojima M."/>
            <person name="Kondo S."/>
            <person name="Konno H."/>
            <person name="Nakano K."/>
            <person name="Ninomiya N."/>
            <person name="Nishio T."/>
            <person name="Okada M."/>
            <person name="Plessy C."/>
            <person name="Shibata K."/>
            <person name="Shiraki T."/>
            <person name="Suzuki S."/>
            <person name="Tagami M."/>
            <person name="Waki K."/>
            <person name="Watahiki A."/>
            <person name="Okamura-Oho Y."/>
            <person name="Suzuki H."/>
            <person name="Kawai J."/>
            <person name="Hayashizaki Y."/>
        </authorList>
    </citation>
    <scope>NUCLEOTIDE SEQUENCE [LARGE SCALE MRNA]</scope>
    <source>
        <strain>C57BL/6J</strain>
    </source>
</reference>
<reference key="3">
    <citation type="submission" date="2005-09" db="EMBL/GenBank/DDBJ databases">
        <authorList>
            <person name="Mural R.J."/>
            <person name="Adams M.D."/>
            <person name="Myers E.W."/>
            <person name="Smith H.O."/>
            <person name="Venter J.C."/>
        </authorList>
    </citation>
    <scope>NUCLEOTIDE SEQUENCE [LARGE SCALE GENOMIC DNA]</scope>
</reference>
<reference key="4">
    <citation type="journal article" date="1997" name="Dev. Dyn.">
        <title>Inactivation of two mouse alkaline phosphatase genes and establishment of a model of infantile hypophosphatasia.</title>
        <authorList>
            <person name="Narisawa S."/>
            <person name="Froehlander N."/>
            <person name="Millan J.L."/>
        </authorList>
    </citation>
    <scope>DISRUPTION PHENOTYPE</scope>
</reference>
<accession>P24823</accession>
<accession>Q3ULC9</accession>
<comment type="function">
    <text evidence="4">Alkaline phosphatase that can hydrolyze various phosphate compounds.</text>
</comment>
<comment type="catalytic activity">
    <reaction evidence="6">
        <text>a phosphate monoester + H2O = an alcohol + phosphate</text>
        <dbReference type="Rhea" id="RHEA:15017"/>
        <dbReference type="ChEBI" id="CHEBI:15377"/>
        <dbReference type="ChEBI" id="CHEBI:30879"/>
        <dbReference type="ChEBI" id="CHEBI:43474"/>
        <dbReference type="ChEBI" id="CHEBI:67140"/>
        <dbReference type="EC" id="3.1.3.1"/>
    </reaction>
</comment>
<comment type="cofactor">
    <cofactor evidence="3">
        <name>Mg(2+)</name>
        <dbReference type="ChEBI" id="CHEBI:18420"/>
    </cofactor>
    <text evidence="3">Binds 1 Mg(2+) ion.</text>
</comment>
<comment type="cofactor">
    <cofactor evidence="3">
        <name>Zn(2+)</name>
        <dbReference type="ChEBI" id="CHEBI:29105"/>
    </cofactor>
    <text evidence="3">Binds 2 Zn(2+) ions.</text>
</comment>
<comment type="cofactor">
    <cofactor evidence="2">
        <name>Ca(2+)</name>
        <dbReference type="ChEBI" id="CHEBI:29108"/>
    </cofactor>
</comment>
<comment type="activity regulation">
    <text evidence="4">Inhibited by L-leucine, EDTA and heat.</text>
</comment>
<comment type="subunit">
    <text evidence="3">Homodimer.</text>
</comment>
<comment type="subcellular location">
    <subcellularLocation>
        <location>Cell membrane</location>
        <topology>Lipid-anchor</topology>
        <topology>GPI-anchor</topology>
    </subcellularLocation>
</comment>
<comment type="tissue specificity">
    <text evidence="7">Embryo and testis.</text>
</comment>
<comment type="disruption phenotype">
    <text evidence="8">No visible phenotype (PubMed:9056646). Mice reproduce normally, give birth to live offspring and do not display any obvious phenotypic abnormalities (PubMed:9056646).</text>
</comment>
<comment type="miscellaneous">
    <text evidence="10">In most mammals there are four different isozymes: placental (ALPP), germ cell (ALPG), intestinal (ALPI) and tissue non-specific (liver/bone/kidney) (ALPL/TNAP).</text>
</comment>
<comment type="similarity">
    <text evidence="10">Belongs to the alkaline phosphatase family.</text>
</comment>
<feature type="signal peptide" evidence="5">
    <location>
        <begin position="1"/>
        <end position="18"/>
    </location>
</feature>
<feature type="chain" id="PRO_0000024045" description="Alkaline phosphatase, germ cell type">
    <location>
        <begin position="19"/>
        <end position="502"/>
    </location>
</feature>
<feature type="propeptide" id="PRO_0000024046" description="Removed in mature form" evidence="5">
    <location>
        <begin position="503"/>
        <end position="529"/>
    </location>
</feature>
<feature type="active site" description="Phosphoserine intermediate">
    <location>
        <position position="110"/>
    </location>
</feature>
<feature type="binding site" evidence="3">
    <location>
        <position position="60"/>
    </location>
    <ligand>
        <name>Mg(2+)</name>
        <dbReference type="ChEBI" id="CHEBI:18420"/>
    </ligand>
</feature>
<feature type="binding site" evidence="3">
    <location>
        <position position="60"/>
    </location>
    <ligand>
        <name>Zn(2+)</name>
        <dbReference type="ChEBI" id="CHEBI:29105"/>
        <label>1</label>
    </ligand>
</feature>
<feature type="binding site" evidence="3">
    <location>
        <position position="110"/>
    </location>
    <ligand>
        <name>Zn(2+)</name>
        <dbReference type="ChEBI" id="CHEBI:29105"/>
        <label>1</label>
    </ligand>
</feature>
<feature type="binding site" evidence="3">
    <location>
        <position position="173"/>
    </location>
    <ligand>
        <name>Mg(2+)</name>
        <dbReference type="ChEBI" id="CHEBI:18420"/>
    </ligand>
</feature>
<feature type="binding site" evidence="2">
    <location>
        <position position="234"/>
    </location>
    <ligand>
        <name>Ca(2+)</name>
        <dbReference type="ChEBI" id="CHEBI:29108"/>
    </ligand>
</feature>
<feature type="binding site" evidence="2">
    <location>
        <position position="287"/>
    </location>
    <ligand>
        <name>Ca(2+)</name>
        <dbReference type="ChEBI" id="CHEBI:29108"/>
    </ligand>
</feature>
<feature type="binding site" evidence="2">
    <location>
        <position position="288"/>
    </location>
    <ligand>
        <name>Ca(2+)</name>
        <dbReference type="ChEBI" id="CHEBI:29108"/>
    </ligand>
</feature>
<feature type="binding site" evidence="2">
    <location>
        <position position="303"/>
    </location>
    <ligand>
        <name>Ca(2+)</name>
        <dbReference type="ChEBI" id="CHEBI:29108"/>
    </ligand>
</feature>
<feature type="binding site" evidence="3">
    <location>
        <position position="329"/>
    </location>
    <ligand>
        <name>Mg(2+)</name>
        <dbReference type="ChEBI" id="CHEBI:18420"/>
    </ligand>
</feature>
<feature type="binding site" evidence="3">
    <location>
        <position position="334"/>
    </location>
    <ligand>
        <name>Zn(2+)</name>
        <dbReference type="ChEBI" id="CHEBI:29105"/>
        <label>2</label>
    </ligand>
</feature>
<feature type="binding site" evidence="3">
    <location>
        <position position="338"/>
    </location>
    <ligand>
        <name>Zn(2+)</name>
        <dbReference type="ChEBI" id="CHEBI:29105"/>
        <label>2</label>
    </ligand>
</feature>
<feature type="binding site" evidence="3">
    <location>
        <position position="375"/>
    </location>
    <ligand>
        <name>Zn(2+)</name>
        <dbReference type="ChEBI" id="CHEBI:29105"/>
        <label>1</label>
    </ligand>
</feature>
<feature type="binding site" evidence="3">
    <location>
        <position position="376"/>
    </location>
    <ligand>
        <name>Zn(2+)</name>
        <dbReference type="ChEBI" id="CHEBI:29105"/>
        <label>1</label>
    </ligand>
</feature>
<feature type="binding site" evidence="3">
    <location>
        <position position="450"/>
    </location>
    <ligand>
        <name>Zn(2+)</name>
        <dbReference type="ChEBI" id="CHEBI:29105"/>
        <label>2</label>
    </ligand>
</feature>
<feature type="lipid moiety-binding region" description="GPI-anchor amidated serine" evidence="5">
    <location>
        <position position="502"/>
    </location>
</feature>
<feature type="glycosylation site" description="N-linked (GlcNAc...) asparagine" evidence="5">
    <location>
        <position position="140"/>
    </location>
</feature>
<feature type="glycosylation site" description="N-linked (GlcNAc...) asparagine" evidence="5">
    <location>
        <position position="267"/>
    </location>
</feature>
<feature type="glycosylation site" description="N-linked (GlcNAc...) asparagine" evidence="5">
    <location>
        <position position="277"/>
    </location>
</feature>
<feature type="disulfide bond" evidence="1">
    <location>
        <begin position="139"/>
        <end position="201"/>
    </location>
</feature>
<feature type="disulfide bond" evidence="1">
    <location>
        <begin position="485"/>
        <end position="492"/>
    </location>
</feature>
<feature type="sequence conflict" description="In Ref. 1; AAA37531." evidence="10" ref="1">
    <original>HL</original>
    <variation>LS</variation>
    <location>
        <begin position="80"/>
        <end position="81"/>
    </location>
</feature>
<feature type="sequence conflict" description="In Ref. 1; AAA37531." evidence="10" ref="1">
    <original>KL</original>
    <variation>IR</variation>
    <location>
        <begin position="361"/>
        <end position="362"/>
    </location>
</feature>
<feature type="sequence conflict" description="In Ref. 1; AAA37531." evidence="10" ref="1">
    <original>A</original>
    <variation>C</variation>
    <location>
        <position position="442"/>
    </location>
</feature>
<sequence length="529" mass="57202">MWGACLLLLGLSLQVCPSVIPVEEENPAFWNRKAAEALDAAKKLKPIQTSAKNLVILMGDGMGVSTVTATRILKGQQQGHLGPETQLAMDRFPHMALSKTYNTDKQIPDSAGTGTAFLCGVKTNMKVIGLSAAARFNQCNTTWGNEVVSVMHRAKKAGKSVGVVTTTSVQHASPAGTYAHTVNRGWYSDAQMPASALQDGCKDISTQLISNMDIDVILGGGRKFMFPKGTPDQEYPTDTKQAGTRLDGRNLVQEWLAKHQGARYVWNRSELIQASLNRSVTHLMGLFEPNDMKYEIHRDPAQDPSLAEMTEVAVRMLSRNPKGFYLFVEGGRIDHGHHETVAYRALTEAVMFDSAVDKADKLTSEQDTMILVTADHSHVFSFGGYTQRGASIFGLAPFKAEDGKSFTSILYGNGPGYKLHNGARADVTEEESSNPTYQQQAAVPLSSETHSGEDVAIFARGPQAHLVHGVQEQNYIAHVMAFAACLEPYTDCGLASPAGQSSAVSPGYMSTLLCLLAGKMLMLMAAAEP</sequence>
<organism>
    <name type="scientific">Mus musculus</name>
    <name type="common">Mouse</name>
    <dbReference type="NCBI Taxonomy" id="10090"/>
    <lineage>
        <taxon>Eukaryota</taxon>
        <taxon>Metazoa</taxon>
        <taxon>Chordata</taxon>
        <taxon>Craniata</taxon>
        <taxon>Vertebrata</taxon>
        <taxon>Euteleostomi</taxon>
        <taxon>Mammalia</taxon>
        <taxon>Eutheria</taxon>
        <taxon>Euarchontoglires</taxon>
        <taxon>Glires</taxon>
        <taxon>Rodentia</taxon>
        <taxon>Myomorpha</taxon>
        <taxon>Muroidea</taxon>
        <taxon>Muridae</taxon>
        <taxon>Murinae</taxon>
        <taxon>Mus</taxon>
        <taxon>Mus</taxon>
    </lineage>
</organism>
<protein>
    <recommendedName>
        <fullName evidence="10">Alkaline phosphatase, germ cell type</fullName>
        <ecNumber evidence="6">3.1.3.1</ecNumber>
    </recommendedName>
    <alternativeName>
        <fullName>Alkaline phosphatase 5</fullName>
    </alternativeName>
    <alternativeName>
        <fullName>Alkaline phosphatase, placental-like</fullName>
    </alternativeName>
    <alternativeName>
        <fullName evidence="9">Embryonic alkaline phosphatase</fullName>
        <shortName evidence="9">EAP</shortName>
    </alternativeName>
    <alternativeName>
        <fullName>Embryonic-type alkaline phosphatase</fullName>
    </alternativeName>
</protein>
<gene>
    <name type="primary">Alpg</name>
    <name type="synonym">Akp5</name>
    <name evidence="11" type="synonym">Alppl2</name>
    <name type="synonym">Eap</name>
</gene>
<proteinExistence type="evidence at transcript level"/>